<protein>
    <recommendedName>
        <fullName evidence="1">Cytidylate kinase</fullName>
        <shortName evidence="1">CK</shortName>
        <ecNumber evidence="1">2.7.4.25</ecNumber>
    </recommendedName>
    <alternativeName>
        <fullName evidence="1">Cytidine monophosphate kinase</fullName>
        <shortName evidence="1">CMP kinase</shortName>
    </alternativeName>
</protein>
<gene>
    <name evidence="1" type="primary">cmk</name>
    <name type="ordered locus">Rcas_0862</name>
</gene>
<reference key="1">
    <citation type="submission" date="2007-08" db="EMBL/GenBank/DDBJ databases">
        <title>Complete sequence of Roseiflexus castenholzii DSM 13941.</title>
        <authorList>
            <consortium name="US DOE Joint Genome Institute"/>
            <person name="Copeland A."/>
            <person name="Lucas S."/>
            <person name="Lapidus A."/>
            <person name="Barry K."/>
            <person name="Glavina del Rio T."/>
            <person name="Dalin E."/>
            <person name="Tice H."/>
            <person name="Pitluck S."/>
            <person name="Thompson L.S."/>
            <person name="Brettin T."/>
            <person name="Bruce D."/>
            <person name="Detter J.C."/>
            <person name="Han C."/>
            <person name="Tapia R."/>
            <person name="Schmutz J."/>
            <person name="Larimer F."/>
            <person name="Land M."/>
            <person name="Hauser L."/>
            <person name="Kyrpides N."/>
            <person name="Mikhailova N."/>
            <person name="Bryant D.A."/>
            <person name="Hanada S."/>
            <person name="Tsukatani Y."/>
            <person name="Richardson P."/>
        </authorList>
    </citation>
    <scope>NUCLEOTIDE SEQUENCE [LARGE SCALE GENOMIC DNA]</scope>
    <source>
        <strain>DSM 13941 / HLO8</strain>
    </source>
</reference>
<accession>A7NHN1</accession>
<comment type="catalytic activity">
    <reaction evidence="1">
        <text>CMP + ATP = CDP + ADP</text>
        <dbReference type="Rhea" id="RHEA:11600"/>
        <dbReference type="ChEBI" id="CHEBI:30616"/>
        <dbReference type="ChEBI" id="CHEBI:58069"/>
        <dbReference type="ChEBI" id="CHEBI:60377"/>
        <dbReference type="ChEBI" id="CHEBI:456216"/>
        <dbReference type="EC" id="2.7.4.25"/>
    </reaction>
</comment>
<comment type="catalytic activity">
    <reaction evidence="1">
        <text>dCMP + ATP = dCDP + ADP</text>
        <dbReference type="Rhea" id="RHEA:25094"/>
        <dbReference type="ChEBI" id="CHEBI:30616"/>
        <dbReference type="ChEBI" id="CHEBI:57566"/>
        <dbReference type="ChEBI" id="CHEBI:58593"/>
        <dbReference type="ChEBI" id="CHEBI:456216"/>
        <dbReference type="EC" id="2.7.4.25"/>
    </reaction>
</comment>
<comment type="subcellular location">
    <subcellularLocation>
        <location evidence="1">Cytoplasm</location>
    </subcellularLocation>
</comment>
<comment type="similarity">
    <text evidence="1">Belongs to the cytidylate kinase family. Type 1 subfamily.</text>
</comment>
<keyword id="KW-0067">ATP-binding</keyword>
<keyword id="KW-0963">Cytoplasm</keyword>
<keyword id="KW-0418">Kinase</keyword>
<keyword id="KW-0547">Nucleotide-binding</keyword>
<keyword id="KW-1185">Reference proteome</keyword>
<keyword id="KW-0808">Transferase</keyword>
<proteinExistence type="inferred from homology"/>
<sequence>MSAPSVITIDGPAGAGKSTLGELLARRLGYLFFDTGVMYRALAWAVLHGAIDPEDGEAVTALARDLDIQVLPPGDAMDGRLYTVLVNGVDVTWELRHPDVERIVSITARHPAVRTVMRERQRAIGSRGRVVMVGRDIGSIVMPDAPLKIYLDASIDERARRRTDEILRRGGDADLQRIRNDMIRRDSLDRYVSAPAADACTIISDGLSPEQVVALVIARIADRCDDSQEARA</sequence>
<evidence type="ECO:0000255" key="1">
    <source>
        <dbReference type="HAMAP-Rule" id="MF_00238"/>
    </source>
</evidence>
<name>KCY_ROSCS</name>
<organism>
    <name type="scientific">Roseiflexus castenholzii (strain DSM 13941 / HLO8)</name>
    <dbReference type="NCBI Taxonomy" id="383372"/>
    <lineage>
        <taxon>Bacteria</taxon>
        <taxon>Bacillati</taxon>
        <taxon>Chloroflexota</taxon>
        <taxon>Chloroflexia</taxon>
        <taxon>Chloroflexales</taxon>
        <taxon>Roseiflexineae</taxon>
        <taxon>Roseiflexaceae</taxon>
        <taxon>Roseiflexus</taxon>
    </lineage>
</organism>
<dbReference type="EC" id="2.7.4.25" evidence="1"/>
<dbReference type="EMBL" id="CP000804">
    <property type="protein sequence ID" value="ABU56978.1"/>
    <property type="molecule type" value="Genomic_DNA"/>
</dbReference>
<dbReference type="RefSeq" id="WP_012119408.1">
    <property type="nucleotide sequence ID" value="NC_009767.1"/>
</dbReference>
<dbReference type="SMR" id="A7NHN1"/>
<dbReference type="STRING" id="383372.Rcas_0862"/>
<dbReference type="KEGG" id="rca:Rcas_0862"/>
<dbReference type="eggNOG" id="COG0283">
    <property type="taxonomic scope" value="Bacteria"/>
</dbReference>
<dbReference type="HOGENOM" id="CLU_079959_0_2_0"/>
<dbReference type="OrthoDB" id="9807434at2"/>
<dbReference type="Proteomes" id="UP000000263">
    <property type="component" value="Chromosome"/>
</dbReference>
<dbReference type="GO" id="GO:0005737">
    <property type="term" value="C:cytoplasm"/>
    <property type="evidence" value="ECO:0007669"/>
    <property type="project" value="UniProtKB-SubCell"/>
</dbReference>
<dbReference type="GO" id="GO:0005524">
    <property type="term" value="F:ATP binding"/>
    <property type="evidence" value="ECO:0007669"/>
    <property type="project" value="UniProtKB-UniRule"/>
</dbReference>
<dbReference type="GO" id="GO:0036430">
    <property type="term" value="F:CMP kinase activity"/>
    <property type="evidence" value="ECO:0007669"/>
    <property type="project" value="RHEA"/>
</dbReference>
<dbReference type="GO" id="GO:0036431">
    <property type="term" value="F:dCMP kinase activity"/>
    <property type="evidence" value="ECO:0007669"/>
    <property type="project" value="RHEA"/>
</dbReference>
<dbReference type="GO" id="GO:0006220">
    <property type="term" value="P:pyrimidine nucleotide metabolic process"/>
    <property type="evidence" value="ECO:0007669"/>
    <property type="project" value="UniProtKB-UniRule"/>
</dbReference>
<dbReference type="CDD" id="cd02020">
    <property type="entry name" value="CMPK"/>
    <property type="match status" value="1"/>
</dbReference>
<dbReference type="Gene3D" id="3.40.50.300">
    <property type="entry name" value="P-loop containing nucleotide triphosphate hydrolases"/>
    <property type="match status" value="1"/>
</dbReference>
<dbReference type="HAMAP" id="MF_00238">
    <property type="entry name" value="Cytidyl_kinase_type1"/>
    <property type="match status" value="1"/>
</dbReference>
<dbReference type="InterPro" id="IPR003136">
    <property type="entry name" value="Cytidylate_kin"/>
</dbReference>
<dbReference type="InterPro" id="IPR011994">
    <property type="entry name" value="Cytidylate_kinase_dom"/>
</dbReference>
<dbReference type="InterPro" id="IPR027417">
    <property type="entry name" value="P-loop_NTPase"/>
</dbReference>
<dbReference type="NCBIfam" id="TIGR00017">
    <property type="entry name" value="cmk"/>
    <property type="match status" value="1"/>
</dbReference>
<dbReference type="Pfam" id="PF02224">
    <property type="entry name" value="Cytidylate_kin"/>
    <property type="match status" value="1"/>
</dbReference>
<dbReference type="SUPFAM" id="SSF52540">
    <property type="entry name" value="P-loop containing nucleoside triphosphate hydrolases"/>
    <property type="match status" value="1"/>
</dbReference>
<feature type="chain" id="PRO_1000100678" description="Cytidylate kinase">
    <location>
        <begin position="1"/>
        <end position="232"/>
    </location>
</feature>
<feature type="binding site" evidence="1">
    <location>
        <begin position="11"/>
        <end position="19"/>
    </location>
    <ligand>
        <name>ATP</name>
        <dbReference type="ChEBI" id="CHEBI:30616"/>
    </ligand>
</feature>